<dbReference type="EMBL" id="CU329671">
    <property type="protein sequence ID" value="CAB08781.1"/>
    <property type="molecule type" value="Genomic_DNA"/>
</dbReference>
<dbReference type="PIR" id="T40000">
    <property type="entry name" value="T40000"/>
</dbReference>
<dbReference type="RefSeq" id="NP_596361.1">
    <property type="nucleotide sequence ID" value="NM_001022282.2"/>
</dbReference>
<dbReference type="SMR" id="P87147"/>
<dbReference type="BioGRID" id="276960">
    <property type="interactions" value="13"/>
</dbReference>
<dbReference type="FunCoup" id="P87147">
    <property type="interactions" value="652"/>
</dbReference>
<dbReference type="STRING" id="284812.P87147"/>
<dbReference type="iPTMnet" id="P87147"/>
<dbReference type="PaxDb" id="4896-SPBC25H2.05.1"/>
<dbReference type="EnsemblFungi" id="SPBC25H2.05.1">
    <property type="protein sequence ID" value="SPBC25H2.05.1:pep"/>
    <property type="gene ID" value="SPBC25H2.05"/>
</dbReference>
<dbReference type="GeneID" id="2540432"/>
<dbReference type="KEGG" id="spo:2540432"/>
<dbReference type="PomBase" id="SPBC25H2.05">
    <property type="gene designation" value="egd2"/>
</dbReference>
<dbReference type="VEuPathDB" id="FungiDB:SPBC25H2.05"/>
<dbReference type="eggNOG" id="KOG2239">
    <property type="taxonomic scope" value="Eukaryota"/>
</dbReference>
<dbReference type="HOGENOM" id="CLU_057806_2_0_1"/>
<dbReference type="InParanoid" id="P87147"/>
<dbReference type="OMA" id="SQKMIFA"/>
<dbReference type="PhylomeDB" id="P87147"/>
<dbReference type="PRO" id="PR:P87147"/>
<dbReference type="Proteomes" id="UP000002485">
    <property type="component" value="Chromosome II"/>
</dbReference>
<dbReference type="GO" id="GO:0005737">
    <property type="term" value="C:cytoplasm"/>
    <property type="evidence" value="ECO:0000318"/>
    <property type="project" value="GO_Central"/>
</dbReference>
<dbReference type="GO" id="GO:0005829">
    <property type="term" value="C:cytosol"/>
    <property type="evidence" value="ECO:0007005"/>
    <property type="project" value="PomBase"/>
</dbReference>
<dbReference type="GO" id="GO:0005854">
    <property type="term" value="C:nascent polypeptide-associated complex"/>
    <property type="evidence" value="ECO:0000353"/>
    <property type="project" value="PomBase"/>
</dbReference>
<dbReference type="GO" id="GO:0005634">
    <property type="term" value="C:nucleus"/>
    <property type="evidence" value="ECO:0007669"/>
    <property type="project" value="UniProtKB-SubCell"/>
</dbReference>
<dbReference type="GO" id="GO:0051082">
    <property type="term" value="F:unfolded protein binding"/>
    <property type="evidence" value="ECO:0000318"/>
    <property type="project" value="GO_Central"/>
</dbReference>
<dbReference type="GO" id="GO:0051083">
    <property type="term" value="P:'de novo' cotranslational protein folding"/>
    <property type="evidence" value="ECO:0000266"/>
    <property type="project" value="PomBase"/>
</dbReference>
<dbReference type="GO" id="GO:0006612">
    <property type="term" value="P:protein targeting to membrane"/>
    <property type="evidence" value="ECO:0000318"/>
    <property type="project" value="GO_Central"/>
</dbReference>
<dbReference type="GO" id="GO:0015031">
    <property type="term" value="P:protein transport"/>
    <property type="evidence" value="ECO:0007669"/>
    <property type="project" value="UniProtKB-KW"/>
</dbReference>
<dbReference type="CDD" id="cd22054">
    <property type="entry name" value="NAC_NACA"/>
    <property type="match status" value="1"/>
</dbReference>
<dbReference type="CDD" id="cd14358">
    <property type="entry name" value="UBA_NAC_euk"/>
    <property type="match status" value="1"/>
</dbReference>
<dbReference type="FunFam" id="1.10.8.10:FF:000006">
    <property type="entry name" value="Putative nascent polypeptide-associated complex subunit alpha"/>
    <property type="match status" value="1"/>
</dbReference>
<dbReference type="Gene3D" id="1.10.8.10">
    <property type="entry name" value="DNA helicase RuvA subunit, C-terminal domain"/>
    <property type="match status" value="1"/>
</dbReference>
<dbReference type="Gene3D" id="2.20.70.30">
    <property type="entry name" value="Nascent polypeptide-associated complex domain"/>
    <property type="match status" value="1"/>
</dbReference>
<dbReference type="InterPro" id="IPR016641">
    <property type="entry name" value="EGD2/NACA0like"/>
</dbReference>
<dbReference type="InterPro" id="IPR044034">
    <property type="entry name" value="NAC-like_UBA"/>
</dbReference>
<dbReference type="InterPro" id="IPR038187">
    <property type="entry name" value="NAC_A/B_dom_sf"/>
</dbReference>
<dbReference type="InterPro" id="IPR002715">
    <property type="entry name" value="Nas_poly-pep-assoc_cplx_dom"/>
</dbReference>
<dbReference type="PANTHER" id="PTHR21713">
    <property type="entry name" value="NASCENT POLYPEPTIDE ASSOCIATED COMPLEX ALPHA SUBUNIT-RELATED"/>
    <property type="match status" value="1"/>
</dbReference>
<dbReference type="Pfam" id="PF01849">
    <property type="entry name" value="NAC"/>
    <property type="match status" value="1"/>
</dbReference>
<dbReference type="Pfam" id="PF19026">
    <property type="entry name" value="UBA_HYPK"/>
    <property type="match status" value="1"/>
</dbReference>
<dbReference type="PIRSF" id="PIRSF015901">
    <property type="entry name" value="NAC_alpha"/>
    <property type="match status" value="1"/>
</dbReference>
<dbReference type="SMART" id="SM01407">
    <property type="entry name" value="NAC"/>
    <property type="match status" value="1"/>
</dbReference>
<dbReference type="PROSITE" id="PS51151">
    <property type="entry name" value="NAC_AB"/>
    <property type="match status" value="1"/>
</dbReference>
<feature type="chain" id="PRO_0000135593" description="Nascent polypeptide-associated complex subunit alpha">
    <location>
        <begin position="1"/>
        <end position="173"/>
    </location>
</feature>
<feature type="domain" description="NAC-A/B" evidence="2">
    <location>
        <begin position="21"/>
        <end position="85"/>
    </location>
</feature>
<feature type="domain" description="UBA">
    <location>
        <begin position="134"/>
        <end position="171"/>
    </location>
</feature>
<feature type="region of interest" description="Disordered" evidence="3">
    <location>
        <begin position="89"/>
        <end position="117"/>
    </location>
</feature>
<feature type="modified residue" description="Phosphoserine" evidence="4">
    <location>
        <position position="122"/>
    </location>
</feature>
<reference key="1">
    <citation type="journal article" date="2002" name="Nature">
        <title>The genome sequence of Schizosaccharomyces pombe.</title>
        <authorList>
            <person name="Wood V."/>
            <person name="Gwilliam R."/>
            <person name="Rajandream M.A."/>
            <person name="Lyne M.H."/>
            <person name="Lyne R."/>
            <person name="Stewart A."/>
            <person name="Sgouros J.G."/>
            <person name="Peat N."/>
            <person name="Hayles J."/>
            <person name="Baker S.G."/>
            <person name="Basham D."/>
            <person name="Bowman S."/>
            <person name="Brooks K."/>
            <person name="Brown D."/>
            <person name="Brown S."/>
            <person name="Chillingworth T."/>
            <person name="Churcher C.M."/>
            <person name="Collins M."/>
            <person name="Connor R."/>
            <person name="Cronin A."/>
            <person name="Davis P."/>
            <person name="Feltwell T."/>
            <person name="Fraser A."/>
            <person name="Gentles S."/>
            <person name="Goble A."/>
            <person name="Hamlin N."/>
            <person name="Harris D.E."/>
            <person name="Hidalgo J."/>
            <person name="Hodgson G."/>
            <person name="Holroyd S."/>
            <person name="Hornsby T."/>
            <person name="Howarth S."/>
            <person name="Huckle E.J."/>
            <person name="Hunt S."/>
            <person name="Jagels K."/>
            <person name="James K.D."/>
            <person name="Jones L."/>
            <person name="Jones M."/>
            <person name="Leather S."/>
            <person name="McDonald S."/>
            <person name="McLean J."/>
            <person name="Mooney P."/>
            <person name="Moule S."/>
            <person name="Mungall K.L."/>
            <person name="Murphy L.D."/>
            <person name="Niblett D."/>
            <person name="Odell C."/>
            <person name="Oliver K."/>
            <person name="O'Neil S."/>
            <person name="Pearson D."/>
            <person name="Quail M.A."/>
            <person name="Rabbinowitsch E."/>
            <person name="Rutherford K.M."/>
            <person name="Rutter S."/>
            <person name="Saunders D."/>
            <person name="Seeger K."/>
            <person name="Sharp S."/>
            <person name="Skelton J."/>
            <person name="Simmonds M.N."/>
            <person name="Squares R."/>
            <person name="Squares S."/>
            <person name="Stevens K."/>
            <person name="Taylor K."/>
            <person name="Taylor R.G."/>
            <person name="Tivey A."/>
            <person name="Walsh S.V."/>
            <person name="Warren T."/>
            <person name="Whitehead S."/>
            <person name="Woodward J.R."/>
            <person name="Volckaert G."/>
            <person name="Aert R."/>
            <person name="Robben J."/>
            <person name="Grymonprez B."/>
            <person name="Weltjens I."/>
            <person name="Vanstreels E."/>
            <person name="Rieger M."/>
            <person name="Schaefer M."/>
            <person name="Mueller-Auer S."/>
            <person name="Gabel C."/>
            <person name="Fuchs M."/>
            <person name="Duesterhoeft A."/>
            <person name="Fritzc C."/>
            <person name="Holzer E."/>
            <person name="Moestl D."/>
            <person name="Hilbert H."/>
            <person name="Borzym K."/>
            <person name="Langer I."/>
            <person name="Beck A."/>
            <person name="Lehrach H."/>
            <person name="Reinhardt R."/>
            <person name="Pohl T.M."/>
            <person name="Eger P."/>
            <person name="Zimmermann W."/>
            <person name="Wedler H."/>
            <person name="Wambutt R."/>
            <person name="Purnelle B."/>
            <person name="Goffeau A."/>
            <person name="Cadieu E."/>
            <person name="Dreano S."/>
            <person name="Gloux S."/>
            <person name="Lelaure V."/>
            <person name="Mottier S."/>
            <person name="Galibert F."/>
            <person name="Aves S.J."/>
            <person name="Xiang Z."/>
            <person name="Hunt C."/>
            <person name="Moore K."/>
            <person name="Hurst S.M."/>
            <person name="Lucas M."/>
            <person name="Rochet M."/>
            <person name="Gaillardin C."/>
            <person name="Tallada V.A."/>
            <person name="Garzon A."/>
            <person name="Thode G."/>
            <person name="Daga R.R."/>
            <person name="Cruzado L."/>
            <person name="Jimenez J."/>
            <person name="Sanchez M."/>
            <person name="del Rey F."/>
            <person name="Benito J."/>
            <person name="Dominguez A."/>
            <person name="Revuelta J.L."/>
            <person name="Moreno S."/>
            <person name="Armstrong J."/>
            <person name="Forsburg S.L."/>
            <person name="Cerutti L."/>
            <person name="Lowe T."/>
            <person name="McCombie W.R."/>
            <person name="Paulsen I."/>
            <person name="Potashkin J."/>
            <person name="Shpakovski G.V."/>
            <person name="Ussery D."/>
            <person name="Barrell B.G."/>
            <person name="Nurse P."/>
        </authorList>
    </citation>
    <scope>NUCLEOTIDE SEQUENCE [LARGE SCALE GENOMIC DNA]</scope>
    <source>
        <strain>972 / ATCC 24843</strain>
    </source>
</reference>
<reference key="2">
    <citation type="journal article" date="2001" name="J. Mol. Biol.">
        <title>Fission yeast nascent polypeptide-associated complex binds to four-way DNA junctions.</title>
        <authorList>
            <person name="Whitby M.C."/>
            <person name="Dixon J."/>
        </authorList>
    </citation>
    <scope>INTERACTION WITH BTF3</scope>
</reference>
<reference key="3">
    <citation type="journal article" date="2008" name="J. Proteome Res.">
        <title>Phosphoproteome analysis of fission yeast.</title>
        <authorList>
            <person name="Wilson-Grady J.T."/>
            <person name="Villen J."/>
            <person name="Gygi S.P."/>
        </authorList>
    </citation>
    <scope>PHOSPHORYLATION [LARGE SCALE ANALYSIS] AT SER-122</scope>
    <scope>IDENTIFICATION BY MASS SPECTROMETRY</scope>
</reference>
<name>NACA_SCHPO</name>
<gene>
    <name type="primary">egd2</name>
    <name type="synonym">ucp15</name>
    <name type="ORF">SPBC25H2.05</name>
</gene>
<sequence>MSVESQPVEKISELPAGSTTVVHAEKAQKLIQKLGLKRVEGITRVAMRRPKNILLIINEPIVYKSSNNAYIVLGKVTVEDMAAQARAFNESQKQATETKEEAAITEESGDAQPADTAKIEESFEQEKAVDETGVDAKDIELVMAQANVSRAKAVTALKENNSDVVNAIMSLTM</sequence>
<protein>
    <recommendedName>
        <fullName>Nascent polypeptide-associated complex subunit alpha</fullName>
        <shortName>NAC-alpha</shortName>
    </recommendedName>
    <alternativeName>
        <fullName>Alpha-NAC</fullName>
    </alternativeName>
</protein>
<keyword id="KW-0963">Cytoplasm</keyword>
<keyword id="KW-0539">Nucleus</keyword>
<keyword id="KW-0597">Phosphoprotein</keyword>
<keyword id="KW-0653">Protein transport</keyword>
<keyword id="KW-1185">Reference proteome</keyword>
<keyword id="KW-0813">Transport</keyword>
<evidence type="ECO:0000250" key="1"/>
<evidence type="ECO:0000255" key="2">
    <source>
        <dbReference type="PROSITE-ProRule" id="PRU00507"/>
    </source>
</evidence>
<evidence type="ECO:0000256" key="3">
    <source>
        <dbReference type="SAM" id="MobiDB-lite"/>
    </source>
</evidence>
<evidence type="ECO:0000269" key="4">
    <source>
    </source>
</evidence>
<evidence type="ECO:0000305" key="5"/>
<organism>
    <name type="scientific">Schizosaccharomyces pombe (strain 972 / ATCC 24843)</name>
    <name type="common">Fission yeast</name>
    <dbReference type="NCBI Taxonomy" id="284812"/>
    <lineage>
        <taxon>Eukaryota</taxon>
        <taxon>Fungi</taxon>
        <taxon>Dikarya</taxon>
        <taxon>Ascomycota</taxon>
        <taxon>Taphrinomycotina</taxon>
        <taxon>Schizosaccharomycetes</taxon>
        <taxon>Schizosaccharomycetales</taxon>
        <taxon>Schizosaccharomycetaceae</taxon>
        <taxon>Schizosaccharomyces</taxon>
    </lineage>
</organism>
<comment type="function">
    <text evidence="1">Component of the nascent polypeptide-associated complex (NAC), a dynamic component of the ribosomal exit tunnel, protecting the emerging polypeptides from interaction with other cytoplasmic proteins to ensure appropriate nascent protein targeting. The NAC complex also promotes mitochondrial protein import by enhancing productive ribosome interactions with the outer mitochondrial membrane and blocks the inappropriate interaction of ribosomes translating non-secretory nascent polypeptides with translocation sites in the membrane of the endoplasmic reticulum. Ucp15 may also be involved in transcription regulation (By similarity).</text>
</comment>
<comment type="subunit">
    <text evidence="1">Part of the nascent polypeptide-associated complex (NAC), consisting of ucp15 and btf3. NAC associates with ribosomes via btf3 (By similarity).</text>
</comment>
<comment type="subcellular location">
    <subcellularLocation>
        <location evidence="1">Cytoplasm</location>
    </subcellularLocation>
    <subcellularLocation>
        <location evidence="1">Nucleus</location>
    </subcellularLocation>
    <text evidence="1">Predominantly cytoplasmic, may also transiently localize to the nucleus.</text>
</comment>
<comment type="similarity">
    <text evidence="5">Belongs to the NAC-alpha family.</text>
</comment>
<proteinExistence type="evidence at protein level"/>
<accession>P87147</accession>